<name>SFGH2_ECO24</name>
<accession>A7ZNX7</accession>
<keyword id="KW-0378">Hydrolase</keyword>
<keyword id="KW-1185">Reference proteome</keyword>
<keyword id="KW-0719">Serine esterase</keyword>
<organism>
    <name type="scientific">Escherichia coli O139:H28 (strain E24377A / ETEC)</name>
    <dbReference type="NCBI Taxonomy" id="331111"/>
    <lineage>
        <taxon>Bacteria</taxon>
        <taxon>Pseudomonadati</taxon>
        <taxon>Pseudomonadota</taxon>
        <taxon>Gammaproteobacteria</taxon>
        <taxon>Enterobacterales</taxon>
        <taxon>Enterobacteriaceae</taxon>
        <taxon>Escherichia</taxon>
    </lineage>
</organism>
<dbReference type="EC" id="3.1.2.12"/>
<dbReference type="EMBL" id="CP000800">
    <property type="protein sequence ID" value="ABV19713.1"/>
    <property type="molecule type" value="Genomic_DNA"/>
</dbReference>
<dbReference type="RefSeq" id="WP_000425428.1">
    <property type="nucleotide sequence ID" value="NC_009801.1"/>
</dbReference>
<dbReference type="SMR" id="A7ZNX7"/>
<dbReference type="ESTHER" id="ecoli-yeiG">
    <property type="family name" value="A85-EsteraseD-FGH"/>
</dbReference>
<dbReference type="MEROPS" id="S09.A39"/>
<dbReference type="GeneID" id="75206407"/>
<dbReference type="KEGG" id="ecw:EcE24377A_2450"/>
<dbReference type="HOGENOM" id="CLU_056472_0_0_6"/>
<dbReference type="Proteomes" id="UP000001122">
    <property type="component" value="Chromosome"/>
</dbReference>
<dbReference type="GO" id="GO:0005829">
    <property type="term" value="C:cytosol"/>
    <property type="evidence" value="ECO:0007669"/>
    <property type="project" value="TreeGrafter"/>
</dbReference>
<dbReference type="GO" id="GO:0052689">
    <property type="term" value="F:carboxylic ester hydrolase activity"/>
    <property type="evidence" value="ECO:0007669"/>
    <property type="project" value="UniProtKB-KW"/>
</dbReference>
<dbReference type="GO" id="GO:0018738">
    <property type="term" value="F:S-formylglutathione hydrolase activity"/>
    <property type="evidence" value="ECO:0007669"/>
    <property type="project" value="UniProtKB-EC"/>
</dbReference>
<dbReference type="GO" id="GO:0046294">
    <property type="term" value="P:formaldehyde catabolic process"/>
    <property type="evidence" value="ECO:0007669"/>
    <property type="project" value="InterPro"/>
</dbReference>
<dbReference type="FunFam" id="3.40.50.1820:FF:000002">
    <property type="entry name" value="S-formylglutathione hydrolase"/>
    <property type="match status" value="1"/>
</dbReference>
<dbReference type="Gene3D" id="3.40.50.1820">
    <property type="entry name" value="alpha/beta hydrolase"/>
    <property type="match status" value="1"/>
</dbReference>
<dbReference type="InterPro" id="IPR029058">
    <property type="entry name" value="AB_hydrolase_fold"/>
</dbReference>
<dbReference type="InterPro" id="IPR000801">
    <property type="entry name" value="Esterase-like"/>
</dbReference>
<dbReference type="InterPro" id="IPR014186">
    <property type="entry name" value="S-formylglutathione_hydrol"/>
</dbReference>
<dbReference type="NCBIfam" id="TIGR02821">
    <property type="entry name" value="fghA_ester_D"/>
    <property type="match status" value="1"/>
</dbReference>
<dbReference type="PANTHER" id="PTHR10061">
    <property type="entry name" value="S-FORMYLGLUTATHIONE HYDROLASE"/>
    <property type="match status" value="1"/>
</dbReference>
<dbReference type="PANTHER" id="PTHR10061:SF1">
    <property type="entry name" value="S-FORMYLGLUTATHIONE HYDROLASE YEIG"/>
    <property type="match status" value="1"/>
</dbReference>
<dbReference type="Pfam" id="PF00756">
    <property type="entry name" value="Esterase"/>
    <property type="match status" value="1"/>
</dbReference>
<dbReference type="SUPFAM" id="SSF53474">
    <property type="entry name" value="alpha/beta-Hydrolases"/>
    <property type="match status" value="1"/>
</dbReference>
<proteinExistence type="inferred from homology"/>
<protein>
    <recommendedName>
        <fullName>S-formylglutathione hydrolase YeiG</fullName>
        <shortName>FGH</shortName>
        <ecNumber>3.1.2.12</ecNumber>
    </recommendedName>
</protein>
<reference key="1">
    <citation type="journal article" date="2008" name="J. Bacteriol.">
        <title>The pangenome structure of Escherichia coli: comparative genomic analysis of E. coli commensal and pathogenic isolates.</title>
        <authorList>
            <person name="Rasko D.A."/>
            <person name="Rosovitz M.J."/>
            <person name="Myers G.S.A."/>
            <person name="Mongodin E.F."/>
            <person name="Fricke W.F."/>
            <person name="Gajer P."/>
            <person name="Crabtree J."/>
            <person name="Sebaihia M."/>
            <person name="Thomson N.R."/>
            <person name="Chaudhuri R."/>
            <person name="Henderson I.R."/>
            <person name="Sperandio V."/>
            <person name="Ravel J."/>
        </authorList>
    </citation>
    <scope>NUCLEOTIDE SEQUENCE [LARGE SCALE GENOMIC DNA]</scope>
    <source>
        <strain>E24377A / ETEC</strain>
    </source>
</reference>
<feature type="chain" id="PRO_0000341669" description="S-formylglutathione hydrolase YeiG">
    <location>
        <begin position="1"/>
        <end position="278"/>
    </location>
</feature>
<feature type="active site" description="Charge relay system" evidence="1">
    <location>
        <position position="145"/>
    </location>
</feature>
<feature type="active site" description="Charge relay system" evidence="1">
    <location>
        <position position="223"/>
    </location>
</feature>
<feature type="active site" description="Charge relay system" evidence="1">
    <location>
        <position position="256"/>
    </location>
</feature>
<gene>
    <name type="primary">yeiG</name>
    <name type="ordered locus">EcE24377A_2450</name>
</gene>
<evidence type="ECO:0000250" key="1"/>
<evidence type="ECO:0000305" key="2"/>
<sequence length="278" mass="31271">MEMLEEHRCFEGWQQRWRHDSSTLNCPMTFSIFLPPPRDHTPPPVLYWLSGLTCNDENFTIKAGAQRVAAELGIVLVMPDTSPRGEQVANDDGYDLGQGAGFYLNATQPPWATHYRMYDYLRDELPALVQSQFNVSDRCAISGHSMGGHGALIMALKNPGKYTSVSAFAPIVNPCSVPWGIKAFSSYLGEDKNAWLEWDSCALMYASNAQDAIPTLIDQGDNDQFLADQLQPAVLAEAARQKAWPMTLRIQPGYDHSYYFIASFIEDHLRFHAQYLLK</sequence>
<comment type="function">
    <text evidence="1">Serine hydrolase involved in the detoxification of formaldehyde. Hydrolyzes S-formylglutathione to glutathione and formate (By similarity).</text>
</comment>
<comment type="catalytic activity">
    <reaction>
        <text>S-formylglutathione + H2O = formate + glutathione + H(+)</text>
        <dbReference type="Rhea" id="RHEA:14961"/>
        <dbReference type="ChEBI" id="CHEBI:15377"/>
        <dbReference type="ChEBI" id="CHEBI:15378"/>
        <dbReference type="ChEBI" id="CHEBI:15740"/>
        <dbReference type="ChEBI" id="CHEBI:57688"/>
        <dbReference type="ChEBI" id="CHEBI:57925"/>
        <dbReference type="EC" id="3.1.2.12"/>
    </reaction>
</comment>
<comment type="similarity">
    <text evidence="2">Belongs to the esterase D family.</text>
</comment>